<keyword id="KW-0007">Acetylation</keyword>
<keyword id="KW-0009">Actin-binding</keyword>
<keyword id="KW-0963">Cytoplasm</keyword>
<keyword id="KW-0206">Cytoskeleton</keyword>
<keyword id="KW-0903">Direct protein sequencing</keyword>
<name>TYB_APLCA</name>
<comment type="function">
    <text evidence="1 4">Plays an important role in the organization of the cytoskeleton. Binds to and sequesters actin monomers (G actin) and therefore inhibits actin polymerization (By similarity). May be involved in the regulation of structural plasticity in the CNS.</text>
</comment>
<comment type="subcellular location">
    <subcellularLocation>
        <location evidence="1">Cytoplasm</location>
        <location evidence="1">Cytoskeleton</location>
    </subcellularLocation>
</comment>
<comment type="tissue specificity">
    <text evidence="3">Expressed in regenerating axons.</text>
</comment>
<comment type="mass spectrometry">
    <text>Variant Gln-27.</text>
</comment>
<comment type="mass spectrometry"/>
<comment type="similarity">
    <text evidence="5">Belongs to the thymosin beta family.</text>
</comment>
<reference key="1">
    <citation type="journal article" date="2003" name="J. Neurosci.">
        <title>An unbiased cDNA library prepared from isolated Aplysia sensory neuron processes is enriched for cytoskeletal and translational mRNAs.</title>
        <authorList>
            <person name="Moccia R."/>
            <person name="Chen D."/>
            <person name="Lyles V."/>
            <person name="Kapuya E."/>
            <person name="Yaping E."/>
            <person name="Kalachikov S."/>
            <person name="Spahn C.M.T."/>
            <person name="Frank J."/>
            <person name="Kandel E.R."/>
            <person name="Barad M."/>
            <person name="Martin K.C."/>
        </authorList>
    </citation>
    <scope>NUCLEOTIDE SEQUENCE [LARGE SCALE MRNA]</scope>
    <source>
        <tissue>Neuron</tissue>
    </source>
</reference>
<reference key="2">
    <citation type="journal article" date="2005" name="J. Neurosci. Res.">
        <title>mRNAs encoding the Aplysia homologues of fasciclin-I and beta-thymosin are expressed only in the second phase of nerve injury and are differentially segregated in axons regenerating in vitro and in vivo.</title>
        <authorList>
            <person name="Colby G.P."/>
            <person name="Sung Y.J."/>
            <person name="Ambron R.T."/>
        </authorList>
    </citation>
    <scope>NUCLEOTIDE SEQUENCE [MRNA]</scope>
    <scope>TISSUE SPECIFICITY</scope>
</reference>
<reference key="3">
    <citation type="journal article" date="2006" name="J. Mass Spectrom.">
        <title>Identification and characterization of homologues of vertebrate beta-thymosin in the marine mollusk Aplysia californica.</title>
        <authorList>
            <person name="Romanova E.V."/>
            <person name="Roth M.J."/>
            <person name="Rubakhin S.S."/>
            <person name="Jakubowski J.A."/>
            <person name="Kelley W.P."/>
            <person name="Kirk M.D."/>
            <person name="Kelleher N.L."/>
            <person name="Sweedler J.V."/>
        </authorList>
    </citation>
    <scope>PROTEIN SEQUENCE</scope>
    <scope>FUNCTION</scope>
    <scope>MASS SPECTROMETRY</scope>
    <scope>VARIANT GLN-27</scope>
    <scope>ACETYLATION AT SER-2</scope>
    <source>
        <tissue>CNS</tissue>
        <tissue>Hemolymph</tissue>
    </source>
</reference>
<feature type="initiator methionine" description="Removed" evidence="4">
    <location>
        <position position="1"/>
    </location>
</feature>
<feature type="chain" id="PRO_0000329074" description="Thymosin beta">
    <location>
        <begin position="2"/>
        <end position="44"/>
    </location>
</feature>
<feature type="region of interest" description="Disordered" evidence="2">
    <location>
        <begin position="1"/>
        <end position="44"/>
    </location>
</feature>
<feature type="modified residue" description="N-acetylserine" evidence="4">
    <location>
        <position position="2"/>
    </location>
</feature>
<feature type="sequence variant" evidence="4">
    <original>H</original>
    <variation>Q</variation>
    <location>
        <position position="27"/>
    </location>
</feature>
<organism>
    <name type="scientific">Aplysia californica</name>
    <name type="common">California sea hare</name>
    <dbReference type="NCBI Taxonomy" id="6500"/>
    <lineage>
        <taxon>Eukaryota</taxon>
        <taxon>Metazoa</taxon>
        <taxon>Spiralia</taxon>
        <taxon>Lophotrochozoa</taxon>
        <taxon>Mollusca</taxon>
        <taxon>Gastropoda</taxon>
        <taxon>Heterobranchia</taxon>
        <taxon>Euthyneura</taxon>
        <taxon>Tectipleura</taxon>
        <taxon>Aplysiida</taxon>
        <taxon>Aplysioidea</taxon>
        <taxon>Aplysiidae</taxon>
        <taxon>Aplysia</taxon>
    </lineage>
</organism>
<evidence type="ECO:0000250" key="1"/>
<evidence type="ECO:0000256" key="2">
    <source>
        <dbReference type="SAM" id="MobiDB-lite"/>
    </source>
</evidence>
<evidence type="ECO:0000269" key="3">
    <source>
    </source>
</evidence>
<evidence type="ECO:0000269" key="4">
    <source>
    </source>
</evidence>
<evidence type="ECO:0000305" key="5"/>
<sequence>MSDKHDKPDISEVTKFDKSKLKKTETHEKNPLPTKETIDQEKQG</sequence>
<accession>Q8T697</accession>
<dbReference type="EMBL" id="AF481063">
    <property type="protein sequence ID" value="AAM09681.1"/>
    <property type="molecule type" value="mRNA"/>
</dbReference>
<dbReference type="EMBL" id="AF454398">
    <property type="protein sequence ID" value="AAM22407.1"/>
    <property type="molecule type" value="mRNA"/>
</dbReference>
<dbReference type="RefSeq" id="NP_001191437.1">
    <property type="nucleotide sequence ID" value="NM_001204508.1"/>
</dbReference>
<dbReference type="SMR" id="Q8T697"/>
<dbReference type="iPTMnet" id="Q8T697"/>
<dbReference type="GeneID" id="100533268"/>
<dbReference type="Proteomes" id="UP000694888">
    <property type="component" value="Unplaced"/>
</dbReference>
<dbReference type="GO" id="GO:0005737">
    <property type="term" value="C:cytoplasm"/>
    <property type="evidence" value="ECO:0007669"/>
    <property type="project" value="UniProtKB-KW"/>
</dbReference>
<dbReference type="GO" id="GO:0005856">
    <property type="term" value="C:cytoskeleton"/>
    <property type="evidence" value="ECO:0007669"/>
    <property type="project" value="UniProtKB-SubCell"/>
</dbReference>
<dbReference type="GO" id="GO:0003785">
    <property type="term" value="F:actin monomer binding"/>
    <property type="evidence" value="ECO:0007669"/>
    <property type="project" value="InterPro"/>
</dbReference>
<dbReference type="GO" id="GO:0007015">
    <property type="term" value="P:actin filament organization"/>
    <property type="evidence" value="ECO:0007669"/>
    <property type="project" value="InterPro"/>
</dbReference>
<dbReference type="GO" id="GO:0030334">
    <property type="term" value="P:regulation of cell migration"/>
    <property type="evidence" value="ECO:0007669"/>
    <property type="project" value="TreeGrafter"/>
</dbReference>
<dbReference type="FunFam" id="1.20.5.520:FF:000001">
    <property type="entry name" value="Thymosin beta"/>
    <property type="match status" value="1"/>
</dbReference>
<dbReference type="Gene3D" id="1.20.5.520">
    <property type="entry name" value="Single helix bin"/>
    <property type="match status" value="1"/>
</dbReference>
<dbReference type="InterPro" id="IPR001152">
    <property type="entry name" value="Beta-thymosin"/>
</dbReference>
<dbReference type="InterPro" id="IPR038386">
    <property type="entry name" value="Beta-thymosin_sf"/>
</dbReference>
<dbReference type="PANTHER" id="PTHR12021">
    <property type="entry name" value="THYMOSIN BETA"/>
    <property type="match status" value="1"/>
</dbReference>
<dbReference type="PANTHER" id="PTHR12021:SF26">
    <property type="entry name" value="THYMOSIN BETA"/>
    <property type="match status" value="1"/>
</dbReference>
<dbReference type="Pfam" id="PF01290">
    <property type="entry name" value="Thymosin"/>
    <property type="match status" value="1"/>
</dbReference>
<dbReference type="PIRSF" id="PIRSF001828">
    <property type="entry name" value="Thymosin_beta"/>
    <property type="match status" value="1"/>
</dbReference>
<dbReference type="SMART" id="SM00152">
    <property type="entry name" value="THY"/>
    <property type="match status" value="1"/>
</dbReference>
<dbReference type="PROSITE" id="PS00500">
    <property type="entry name" value="THYMOSIN_B4"/>
    <property type="match status" value="1"/>
</dbReference>
<protein>
    <recommendedName>
        <fullName>Thymosin beta</fullName>
    </recommendedName>
    <alternativeName>
        <fullName>Beta-thymosin</fullName>
    </alternativeName>
</protein>
<proteinExistence type="evidence at protein level"/>